<accession>P09937</accession>
<accession>D6W312</accession>
<sequence>MPSNLNIVKVTKPQEENKNFLHKNTNEPNEMEQSQTQEAVTENFTENSNLSANEHAARRGRLNLKTVDHIETYPIVQETEEIAKKIALTRIILAQTKPRIDKVVVSRPVQAVAPVVNFFDKMANSTLSTVERVVPSLKTKTYKRLGEEIALPYTLSKKYGKQLRDTTARNGDNYVYQPVHGRLMKFRKYYNEKFIDTKGKPLIRGQLDPVLLPVNNTFEKVTVKYLPKGKKVPNDSFSCEFNRGLALEYNFMTRAVSAVSHQVVGIAKLPIAYGYHTNSVYNKNLDKQADLKMKNVLRGTWDTITDLEREIWASVTDRSLFRFFGNKSEGGDLPHLVQ</sequence>
<feature type="chain" id="PRO_0000072154" description="Sporulation-specific protein 4">
    <location>
        <begin position="1"/>
        <end position="338"/>
    </location>
</feature>
<feature type="region of interest" description="Disordered" evidence="1">
    <location>
        <begin position="14"/>
        <end position="37"/>
    </location>
</feature>
<feature type="compositionally biased region" description="Polar residues" evidence="1">
    <location>
        <begin position="22"/>
        <end position="37"/>
    </location>
</feature>
<feature type="sequence conflict" description="In Ref. 1; AAA35081." evidence="2" ref="1">
    <original>R</original>
    <variation>H</variation>
    <location>
        <position position="107"/>
    </location>
</feature>
<feature type="sequence conflict" description="In Ref. 1; AAA35081." evidence="2" ref="1">
    <original>H</original>
    <variation>D</variation>
    <location>
        <position position="180"/>
    </location>
</feature>
<reference key="1">
    <citation type="journal article" date="1986" name="Mol. Cell. Biol.">
        <title>The SPS4 gene of Saccharomyces cerevisiae encodes a major sporulation-specific mRNA.</title>
        <authorList>
            <person name="Garber A.T."/>
            <person name="Segall J."/>
        </authorList>
    </citation>
    <scope>NUCLEOTIDE SEQUENCE [GENOMIC DNA]</scope>
</reference>
<reference key="2">
    <citation type="journal article" date="1996" name="Yeast">
        <title>Sequencing of a 35.71 kb DNA segment on the right arm of yeast chromosome XV reveals regions of similarity to chromosomes I and XIII.</title>
        <authorList>
            <person name="Pearson B.M."/>
            <person name="Hernando Y."/>
            <person name="Payne J."/>
            <person name="Wolf S.S."/>
            <person name="Kalogeropoulos A."/>
            <person name="Schweizer M."/>
        </authorList>
    </citation>
    <scope>NUCLEOTIDE SEQUENCE [GENOMIC DNA]</scope>
    <source>
        <strain>ATCC 96604 / S288c / FY1679</strain>
    </source>
</reference>
<reference key="3">
    <citation type="journal article" date="1997" name="Nature">
        <title>The nucleotide sequence of Saccharomyces cerevisiae chromosome XV.</title>
        <authorList>
            <person name="Dujon B."/>
            <person name="Albermann K."/>
            <person name="Aldea M."/>
            <person name="Alexandraki D."/>
            <person name="Ansorge W."/>
            <person name="Arino J."/>
            <person name="Benes V."/>
            <person name="Bohn C."/>
            <person name="Bolotin-Fukuhara M."/>
            <person name="Bordonne R."/>
            <person name="Boyer J."/>
            <person name="Camasses A."/>
            <person name="Casamayor A."/>
            <person name="Casas C."/>
            <person name="Cheret G."/>
            <person name="Cziepluch C."/>
            <person name="Daignan-Fornier B."/>
            <person name="Dang V.-D."/>
            <person name="de Haan M."/>
            <person name="Delius H."/>
            <person name="Durand P."/>
            <person name="Fairhead C."/>
            <person name="Feldmann H."/>
            <person name="Gaillon L."/>
            <person name="Galisson F."/>
            <person name="Gamo F.-J."/>
            <person name="Gancedo C."/>
            <person name="Goffeau A."/>
            <person name="Goulding S.E."/>
            <person name="Grivell L.A."/>
            <person name="Habbig B."/>
            <person name="Hand N.J."/>
            <person name="Hani J."/>
            <person name="Hattenhorst U."/>
            <person name="Hebling U."/>
            <person name="Hernando Y."/>
            <person name="Herrero E."/>
            <person name="Heumann K."/>
            <person name="Hiesel R."/>
            <person name="Hilger F."/>
            <person name="Hofmann B."/>
            <person name="Hollenberg C.P."/>
            <person name="Hughes B."/>
            <person name="Jauniaux J.-C."/>
            <person name="Kalogeropoulos A."/>
            <person name="Katsoulou C."/>
            <person name="Kordes E."/>
            <person name="Lafuente M.J."/>
            <person name="Landt O."/>
            <person name="Louis E.J."/>
            <person name="Maarse A.C."/>
            <person name="Madania A."/>
            <person name="Mannhaupt G."/>
            <person name="Marck C."/>
            <person name="Martin R.P."/>
            <person name="Mewes H.-W."/>
            <person name="Michaux G."/>
            <person name="Paces V."/>
            <person name="Parle-McDermott A.G."/>
            <person name="Pearson B.M."/>
            <person name="Perrin A."/>
            <person name="Pettersson B."/>
            <person name="Poch O."/>
            <person name="Pohl T.M."/>
            <person name="Poirey R."/>
            <person name="Portetelle D."/>
            <person name="Pujol A."/>
            <person name="Purnelle B."/>
            <person name="Ramezani Rad M."/>
            <person name="Rechmann S."/>
            <person name="Schwager C."/>
            <person name="Schweizer M."/>
            <person name="Sor F."/>
            <person name="Sterky F."/>
            <person name="Tarassov I.A."/>
            <person name="Teodoru C."/>
            <person name="Tettelin H."/>
            <person name="Thierry A."/>
            <person name="Tobiasch E."/>
            <person name="Tzermia M."/>
            <person name="Uhlen M."/>
            <person name="Unseld M."/>
            <person name="Valens M."/>
            <person name="Vandenbol M."/>
            <person name="Vetter I."/>
            <person name="Vlcek C."/>
            <person name="Voet M."/>
            <person name="Volckaert G."/>
            <person name="Voss H."/>
            <person name="Wambutt R."/>
            <person name="Wedler H."/>
            <person name="Wiemann S."/>
            <person name="Winsor B."/>
            <person name="Wolfe K.H."/>
            <person name="Zollner A."/>
            <person name="Zumstein E."/>
            <person name="Kleine K."/>
        </authorList>
    </citation>
    <scope>NUCLEOTIDE SEQUENCE [LARGE SCALE GENOMIC DNA]</scope>
    <source>
        <strain>ATCC 204508 / S288c</strain>
    </source>
</reference>
<reference key="4">
    <citation type="journal article" date="2014" name="G3 (Bethesda)">
        <title>The reference genome sequence of Saccharomyces cerevisiae: Then and now.</title>
        <authorList>
            <person name="Engel S.R."/>
            <person name="Dietrich F.S."/>
            <person name="Fisk D.G."/>
            <person name="Binkley G."/>
            <person name="Balakrishnan R."/>
            <person name="Costanzo M.C."/>
            <person name="Dwight S.S."/>
            <person name="Hitz B.C."/>
            <person name="Karra K."/>
            <person name="Nash R.S."/>
            <person name="Weng S."/>
            <person name="Wong E.D."/>
            <person name="Lloyd P."/>
            <person name="Skrzypek M.S."/>
            <person name="Miyasato S.R."/>
            <person name="Simison M."/>
            <person name="Cherry J.M."/>
        </authorList>
    </citation>
    <scope>GENOME REANNOTATION</scope>
    <source>
        <strain>ATCC 204508 / S288c</strain>
    </source>
</reference>
<keyword id="KW-0469">Meiosis</keyword>
<keyword id="KW-1185">Reference proteome</keyword>
<keyword id="KW-0749">Sporulation</keyword>
<comment type="function">
    <text>Not essential for sporulation. Might be a component of the cell wall.</text>
</comment>
<comment type="developmental stage">
    <text>Expressed at 6 of 8 hours of sporulation with maximal transcript accumulation occurring at 8 to 12 hours, a time at which the meiotic events if sporulation have been completed and the deposition of spore wall components is beginning.</text>
</comment>
<dbReference type="EMBL" id="M14684">
    <property type="protein sequence ID" value="AAA35081.1"/>
    <property type="molecule type" value="Genomic_DNA"/>
</dbReference>
<dbReference type="EMBL" id="X90565">
    <property type="protein sequence ID" value="CAA62168.1"/>
    <property type="molecule type" value="Genomic_DNA"/>
</dbReference>
<dbReference type="EMBL" id="Z75221">
    <property type="protein sequence ID" value="CAA99633.1"/>
    <property type="molecule type" value="Genomic_DNA"/>
</dbReference>
<dbReference type="EMBL" id="BK006948">
    <property type="protein sequence ID" value="DAA11078.1"/>
    <property type="molecule type" value="Genomic_DNA"/>
</dbReference>
<dbReference type="PIR" id="S58324">
    <property type="entry name" value="S58324"/>
</dbReference>
<dbReference type="RefSeq" id="NP_014958.3">
    <property type="nucleotide sequence ID" value="NM_001183733.3"/>
</dbReference>
<dbReference type="BioGRID" id="34701">
    <property type="interactions" value="121"/>
</dbReference>
<dbReference type="FunCoup" id="P09937">
    <property type="interactions" value="206"/>
</dbReference>
<dbReference type="IntAct" id="P09937">
    <property type="interactions" value="1"/>
</dbReference>
<dbReference type="STRING" id="4932.YOR313C"/>
<dbReference type="GlyGen" id="P09937">
    <property type="glycosylation" value="1 site, 1 O-linked glycan (1 site)"/>
</dbReference>
<dbReference type="PaxDb" id="4932-YOR313C"/>
<dbReference type="PeptideAtlas" id="P09937"/>
<dbReference type="EnsemblFungi" id="YOR313C_mRNA">
    <property type="protein sequence ID" value="YOR313C"/>
    <property type="gene ID" value="YOR313C"/>
</dbReference>
<dbReference type="GeneID" id="854490"/>
<dbReference type="KEGG" id="sce:YOR313C"/>
<dbReference type="AGR" id="SGD:S000005840"/>
<dbReference type="SGD" id="S000005840">
    <property type="gene designation" value="SPS4"/>
</dbReference>
<dbReference type="VEuPathDB" id="FungiDB:YOR313C"/>
<dbReference type="eggNOG" id="ENOG502RY6S">
    <property type="taxonomic scope" value="Eukaryota"/>
</dbReference>
<dbReference type="HOGENOM" id="CLU_047747_0_0_1"/>
<dbReference type="InParanoid" id="P09937"/>
<dbReference type="OMA" id="HIETYPI"/>
<dbReference type="OrthoDB" id="376826at2759"/>
<dbReference type="BioCyc" id="YEAST:G3O-33796-MONOMER"/>
<dbReference type="BioGRID-ORCS" id="854490">
    <property type="hits" value="0 hits in 10 CRISPR screens"/>
</dbReference>
<dbReference type="PRO" id="PR:P09937"/>
<dbReference type="Proteomes" id="UP000002311">
    <property type="component" value="Chromosome XV"/>
</dbReference>
<dbReference type="RNAct" id="P09937">
    <property type="molecule type" value="protein"/>
</dbReference>
<dbReference type="GO" id="GO:0005811">
    <property type="term" value="C:lipid droplet"/>
    <property type="evidence" value="ECO:0007005"/>
    <property type="project" value="SGD"/>
</dbReference>
<dbReference type="GO" id="GO:0030437">
    <property type="term" value="P:ascospore formation"/>
    <property type="evidence" value="ECO:0000270"/>
    <property type="project" value="SGD"/>
</dbReference>
<dbReference type="Pfam" id="PF17316">
    <property type="entry name" value="Perilipin_2"/>
    <property type="match status" value="1"/>
</dbReference>
<proteinExistence type="evidence at transcript level"/>
<protein>
    <recommendedName>
        <fullName>Sporulation-specific protein 4</fullName>
    </recommendedName>
</protein>
<evidence type="ECO:0000256" key="1">
    <source>
        <dbReference type="SAM" id="MobiDB-lite"/>
    </source>
</evidence>
<evidence type="ECO:0000305" key="2"/>
<organism>
    <name type="scientific">Saccharomyces cerevisiae (strain ATCC 204508 / S288c)</name>
    <name type="common">Baker's yeast</name>
    <dbReference type="NCBI Taxonomy" id="559292"/>
    <lineage>
        <taxon>Eukaryota</taxon>
        <taxon>Fungi</taxon>
        <taxon>Dikarya</taxon>
        <taxon>Ascomycota</taxon>
        <taxon>Saccharomycotina</taxon>
        <taxon>Saccharomycetes</taxon>
        <taxon>Saccharomycetales</taxon>
        <taxon>Saccharomycetaceae</taxon>
        <taxon>Saccharomyces</taxon>
    </lineage>
</organism>
<name>SPS4_YEAST</name>
<gene>
    <name type="primary">SPS4</name>
    <name type="ordered locus">YOR313C</name>
    <name type="ORF">O6120</name>
</gene>